<reference key="1">
    <citation type="journal article" date="2008" name="Genome Res.">
        <title>Genome sequence of the beta-rhizobium Cupriavidus taiwanensis and comparative genomics of rhizobia.</title>
        <authorList>
            <person name="Amadou C."/>
            <person name="Pascal G."/>
            <person name="Mangenot S."/>
            <person name="Glew M."/>
            <person name="Bontemps C."/>
            <person name="Capela D."/>
            <person name="Carrere S."/>
            <person name="Cruveiller S."/>
            <person name="Dossat C."/>
            <person name="Lajus A."/>
            <person name="Marchetti M."/>
            <person name="Poinsot V."/>
            <person name="Rouy Z."/>
            <person name="Servin B."/>
            <person name="Saad M."/>
            <person name="Schenowitz C."/>
            <person name="Barbe V."/>
            <person name="Batut J."/>
            <person name="Medigue C."/>
            <person name="Masson-Boivin C."/>
        </authorList>
    </citation>
    <scope>NUCLEOTIDE SEQUENCE [LARGE SCALE GENOMIC DNA]</scope>
    <source>
        <strain>DSM 17343 / BCRC 17206 / CCUG 44338 / CIP 107171 / LMG 19424 / R1</strain>
    </source>
</reference>
<protein>
    <recommendedName>
        <fullName evidence="1">UDP-N-acetylmuramate--L-alanine ligase</fullName>
        <ecNumber evidence="1">6.3.2.8</ecNumber>
    </recommendedName>
    <alternativeName>
        <fullName evidence="1">UDP-N-acetylmuramoyl-L-alanine synthetase</fullName>
    </alternativeName>
</protein>
<feature type="chain" id="PRO_1000091096" description="UDP-N-acetylmuramate--L-alanine ligase">
    <location>
        <begin position="1"/>
        <end position="474"/>
    </location>
</feature>
<feature type="binding site" evidence="1">
    <location>
        <begin position="112"/>
        <end position="118"/>
    </location>
    <ligand>
        <name>ATP</name>
        <dbReference type="ChEBI" id="CHEBI:30616"/>
    </ligand>
</feature>
<organism>
    <name type="scientific">Cupriavidus taiwanensis (strain DSM 17343 / BCRC 17206 / CCUG 44338 / CIP 107171 / LMG 19424 / R1)</name>
    <name type="common">Ralstonia taiwanensis (strain LMG 19424)</name>
    <dbReference type="NCBI Taxonomy" id="977880"/>
    <lineage>
        <taxon>Bacteria</taxon>
        <taxon>Pseudomonadati</taxon>
        <taxon>Pseudomonadota</taxon>
        <taxon>Betaproteobacteria</taxon>
        <taxon>Burkholderiales</taxon>
        <taxon>Burkholderiaceae</taxon>
        <taxon>Cupriavidus</taxon>
    </lineage>
</organism>
<name>MURC_CUPTR</name>
<keyword id="KW-0067">ATP-binding</keyword>
<keyword id="KW-0131">Cell cycle</keyword>
<keyword id="KW-0132">Cell division</keyword>
<keyword id="KW-0133">Cell shape</keyword>
<keyword id="KW-0961">Cell wall biogenesis/degradation</keyword>
<keyword id="KW-0963">Cytoplasm</keyword>
<keyword id="KW-0436">Ligase</keyword>
<keyword id="KW-0547">Nucleotide-binding</keyword>
<keyword id="KW-0573">Peptidoglycan synthesis</keyword>
<sequence>MKHIVKNIHFVGIGGAGMSGIAEVLLNLGYKVSGSDVGNNAATRRLASLGATVMHGHDAANVSGANAVVVSTAVSGDNPEVLAARSQRIPVVPRAVMLAELMRLKQGVAIAGTHGKTTTTSLVASVLAEGGLDPTFVIGGRLNSAGANARLGTGDFIVAEADESDASFLNLFPVIEVITNIDADHMDTYGHDFARLKQAFIEFTQRLPFYGIAVLCVDDPNVREILPFVSKPVVRYGFAEDAQIRAVDARAVDGQMHFTVLRQLNGHTEPPLEIVLNLPGLHNVQNALAAIAIATELEVPDAAIVKALREFHGVGRRFQRYGEVATPDGAGTFTLVDDYGHHPVEMAATLAAARGAFPERRLVLAFQPHRFTRTRDCFEDFVKVLGTVDALLLSEVYAAGEAPIVAADGRALTRALRVAGKVEPVFVEQMEEMPQAILNAVRPGDVVVTMGAGSIGGVPGQLVSHQQALQGSQA</sequence>
<gene>
    <name evidence="1" type="primary">murC</name>
    <name type="ordered locus">RALTA_A2728</name>
</gene>
<accession>B3R6V8</accession>
<evidence type="ECO:0000255" key="1">
    <source>
        <dbReference type="HAMAP-Rule" id="MF_00046"/>
    </source>
</evidence>
<dbReference type="EC" id="6.3.2.8" evidence="1"/>
<dbReference type="EMBL" id="CU633749">
    <property type="protein sequence ID" value="CAQ70658.1"/>
    <property type="molecule type" value="Genomic_DNA"/>
</dbReference>
<dbReference type="RefSeq" id="WP_012353953.1">
    <property type="nucleotide sequence ID" value="NC_010528.1"/>
</dbReference>
<dbReference type="SMR" id="B3R6V8"/>
<dbReference type="GeneID" id="29760882"/>
<dbReference type="KEGG" id="cti:RALTA_A2728"/>
<dbReference type="eggNOG" id="COG0773">
    <property type="taxonomic scope" value="Bacteria"/>
</dbReference>
<dbReference type="HOGENOM" id="CLU_028104_2_2_4"/>
<dbReference type="BioCyc" id="CTAI977880:RALTA_RS13275-MONOMER"/>
<dbReference type="UniPathway" id="UPA00219"/>
<dbReference type="Proteomes" id="UP000001692">
    <property type="component" value="Chromosome 1"/>
</dbReference>
<dbReference type="GO" id="GO:0005737">
    <property type="term" value="C:cytoplasm"/>
    <property type="evidence" value="ECO:0007669"/>
    <property type="project" value="UniProtKB-SubCell"/>
</dbReference>
<dbReference type="GO" id="GO:0005524">
    <property type="term" value="F:ATP binding"/>
    <property type="evidence" value="ECO:0007669"/>
    <property type="project" value="UniProtKB-UniRule"/>
</dbReference>
<dbReference type="GO" id="GO:0008763">
    <property type="term" value="F:UDP-N-acetylmuramate-L-alanine ligase activity"/>
    <property type="evidence" value="ECO:0007669"/>
    <property type="project" value="UniProtKB-UniRule"/>
</dbReference>
<dbReference type="GO" id="GO:0051301">
    <property type="term" value="P:cell division"/>
    <property type="evidence" value="ECO:0007669"/>
    <property type="project" value="UniProtKB-KW"/>
</dbReference>
<dbReference type="GO" id="GO:0071555">
    <property type="term" value="P:cell wall organization"/>
    <property type="evidence" value="ECO:0007669"/>
    <property type="project" value="UniProtKB-KW"/>
</dbReference>
<dbReference type="GO" id="GO:0009252">
    <property type="term" value="P:peptidoglycan biosynthetic process"/>
    <property type="evidence" value="ECO:0007669"/>
    <property type="project" value="UniProtKB-UniRule"/>
</dbReference>
<dbReference type="GO" id="GO:0008360">
    <property type="term" value="P:regulation of cell shape"/>
    <property type="evidence" value="ECO:0007669"/>
    <property type="project" value="UniProtKB-KW"/>
</dbReference>
<dbReference type="FunFam" id="3.40.1190.10:FF:000001">
    <property type="entry name" value="UDP-N-acetylmuramate--L-alanine ligase"/>
    <property type="match status" value="1"/>
</dbReference>
<dbReference type="Gene3D" id="3.90.190.20">
    <property type="entry name" value="Mur ligase, C-terminal domain"/>
    <property type="match status" value="1"/>
</dbReference>
<dbReference type="Gene3D" id="3.40.1190.10">
    <property type="entry name" value="Mur-like, catalytic domain"/>
    <property type="match status" value="1"/>
</dbReference>
<dbReference type="Gene3D" id="3.40.50.720">
    <property type="entry name" value="NAD(P)-binding Rossmann-like Domain"/>
    <property type="match status" value="1"/>
</dbReference>
<dbReference type="HAMAP" id="MF_00046">
    <property type="entry name" value="MurC"/>
    <property type="match status" value="1"/>
</dbReference>
<dbReference type="InterPro" id="IPR036565">
    <property type="entry name" value="Mur-like_cat_sf"/>
</dbReference>
<dbReference type="InterPro" id="IPR004101">
    <property type="entry name" value="Mur_ligase_C"/>
</dbReference>
<dbReference type="InterPro" id="IPR036615">
    <property type="entry name" value="Mur_ligase_C_dom_sf"/>
</dbReference>
<dbReference type="InterPro" id="IPR013221">
    <property type="entry name" value="Mur_ligase_cen"/>
</dbReference>
<dbReference type="InterPro" id="IPR000713">
    <property type="entry name" value="Mur_ligase_N"/>
</dbReference>
<dbReference type="InterPro" id="IPR050061">
    <property type="entry name" value="MurCDEF_pg_biosynth"/>
</dbReference>
<dbReference type="InterPro" id="IPR005758">
    <property type="entry name" value="UDP-N-AcMur_Ala_ligase_MurC"/>
</dbReference>
<dbReference type="NCBIfam" id="TIGR01082">
    <property type="entry name" value="murC"/>
    <property type="match status" value="1"/>
</dbReference>
<dbReference type="PANTHER" id="PTHR43445:SF3">
    <property type="entry name" value="UDP-N-ACETYLMURAMATE--L-ALANINE LIGASE"/>
    <property type="match status" value="1"/>
</dbReference>
<dbReference type="PANTHER" id="PTHR43445">
    <property type="entry name" value="UDP-N-ACETYLMURAMATE--L-ALANINE LIGASE-RELATED"/>
    <property type="match status" value="1"/>
</dbReference>
<dbReference type="Pfam" id="PF01225">
    <property type="entry name" value="Mur_ligase"/>
    <property type="match status" value="1"/>
</dbReference>
<dbReference type="Pfam" id="PF02875">
    <property type="entry name" value="Mur_ligase_C"/>
    <property type="match status" value="1"/>
</dbReference>
<dbReference type="Pfam" id="PF08245">
    <property type="entry name" value="Mur_ligase_M"/>
    <property type="match status" value="1"/>
</dbReference>
<dbReference type="SUPFAM" id="SSF51984">
    <property type="entry name" value="MurCD N-terminal domain"/>
    <property type="match status" value="1"/>
</dbReference>
<dbReference type="SUPFAM" id="SSF53623">
    <property type="entry name" value="MurD-like peptide ligases, catalytic domain"/>
    <property type="match status" value="1"/>
</dbReference>
<dbReference type="SUPFAM" id="SSF53244">
    <property type="entry name" value="MurD-like peptide ligases, peptide-binding domain"/>
    <property type="match status" value="1"/>
</dbReference>
<proteinExistence type="inferred from homology"/>
<comment type="function">
    <text evidence="1">Cell wall formation.</text>
</comment>
<comment type="catalytic activity">
    <reaction evidence="1">
        <text>UDP-N-acetyl-alpha-D-muramate + L-alanine + ATP = UDP-N-acetyl-alpha-D-muramoyl-L-alanine + ADP + phosphate + H(+)</text>
        <dbReference type="Rhea" id="RHEA:23372"/>
        <dbReference type="ChEBI" id="CHEBI:15378"/>
        <dbReference type="ChEBI" id="CHEBI:30616"/>
        <dbReference type="ChEBI" id="CHEBI:43474"/>
        <dbReference type="ChEBI" id="CHEBI:57972"/>
        <dbReference type="ChEBI" id="CHEBI:70757"/>
        <dbReference type="ChEBI" id="CHEBI:83898"/>
        <dbReference type="ChEBI" id="CHEBI:456216"/>
        <dbReference type="EC" id="6.3.2.8"/>
    </reaction>
</comment>
<comment type="pathway">
    <text evidence="1">Cell wall biogenesis; peptidoglycan biosynthesis.</text>
</comment>
<comment type="subcellular location">
    <subcellularLocation>
        <location evidence="1">Cytoplasm</location>
    </subcellularLocation>
</comment>
<comment type="similarity">
    <text evidence="1">Belongs to the MurCDEF family.</text>
</comment>